<proteinExistence type="inferred from homology"/>
<accession>Q6C2A3</accession>
<reference key="1">
    <citation type="journal article" date="2004" name="Nature">
        <title>Genome evolution in yeasts.</title>
        <authorList>
            <person name="Dujon B."/>
            <person name="Sherman D."/>
            <person name="Fischer G."/>
            <person name="Durrens P."/>
            <person name="Casaregola S."/>
            <person name="Lafontaine I."/>
            <person name="de Montigny J."/>
            <person name="Marck C."/>
            <person name="Neuveglise C."/>
            <person name="Talla E."/>
            <person name="Goffard N."/>
            <person name="Frangeul L."/>
            <person name="Aigle M."/>
            <person name="Anthouard V."/>
            <person name="Babour A."/>
            <person name="Barbe V."/>
            <person name="Barnay S."/>
            <person name="Blanchin S."/>
            <person name="Beckerich J.-M."/>
            <person name="Beyne E."/>
            <person name="Bleykasten C."/>
            <person name="Boisrame A."/>
            <person name="Boyer J."/>
            <person name="Cattolico L."/>
            <person name="Confanioleri F."/>
            <person name="de Daruvar A."/>
            <person name="Despons L."/>
            <person name="Fabre E."/>
            <person name="Fairhead C."/>
            <person name="Ferry-Dumazet H."/>
            <person name="Groppi A."/>
            <person name="Hantraye F."/>
            <person name="Hennequin C."/>
            <person name="Jauniaux N."/>
            <person name="Joyet P."/>
            <person name="Kachouri R."/>
            <person name="Kerrest A."/>
            <person name="Koszul R."/>
            <person name="Lemaire M."/>
            <person name="Lesur I."/>
            <person name="Ma L."/>
            <person name="Muller H."/>
            <person name="Nicaud J.-M."/>
            <person name="Nikolski M."/>
            <person name="Oztas S."/>
            <person name="Ozier-Kalogeropoulos O."/>
            <person name="Pellenz S."/>
            <person name="Potier S."/>
            <person name="Richard G.-F."/>
            <person name="Straub M.-L."/>
            <person name="Suleau A."/>
            <person name="Swennen D."/>
            <person name="Tekaia F."/>
            <person name="Wesolowski-Louvel M."/>
            <person name="Westhof E."/>
            <person name="Wirth B."/>
            <person name="Zeniou-Meyer M."/>
            <person name="Zivanovic Y."/>
            <person name="Bolotin-Fukuhara M."/>
            <person name="Thierry A."/>
            <person name="Bouchier C."/>
            <person name="Caudron B."/>
            <person name="Scarpelli C."/>
            <person name="Gaillardin C."/>
            <person name="Weissenbach J."/>
            <person name="Wincker P."/>
            <person name="Souciet J.-L."/>
        </authorList>
    </citation>
    <scope>NUCLEOTIDE SEQUENCE [LARGE SCALE GENOMIC DNA]</scope>
    <source>
        <strain>CLIB 122 / E 150</strain>
    </source>
</reference>
<dbReference type="EC" id="3.6.-.-" evidence="2"/>
<dbReference type="EC" id="2.7.11.1" evidence="1"/>
<dbReference type="EMBL" id="CR382132">
    <property type="protein sequence ID" value="CAG78016.1"/>
    <property type="molecule type" value="Genomic_DNA"/>
</dbReference>
<dbReference type="RefSeq" id="XP_505209.1">
    <property type="nucleotide sequence ID" value="XM_505209.1"/>
</dbReference>
<dbReference type="SMR" id="Q6C2A3"/>
<dbReference type="FunCoup" id="Q6C2A3">
    <property type="interactions" value="922"/>
</dbReference>
<dbReference type="STRING" id="284591.Q6C2A3"/>
<dbReference type="EnsemblFungi" id="CAG78016">
    <property type="protein sequence ID" value="CAG78016"/>
    <property type="gene ID" value="YALI0_F09471g"/>
</dbReference>
<dbReference type="KEGG" id="yli:2908942"/>
<dbReference type="VEuPathDB" id="FungiDB:YALI0_F09471g"/>
<dbReference type="HOGENOM" id="CLU_063953_1_1_1"/>
<dbReference type="InParanoid" id="Q6C2A3"/>
<dbReference type="OMA" id="HKLYMEY"/>
<dbReference type="OrthoDB" id="105772at4891"/>
<dbReference type="Proteomes" id="UP000001300">
    <property type="component" value="Chromosome F"/>
</dbReference>
<dbReference type="GO" id="GO:0000781">
    <property type="term" value="C:chromosome, telomeric region"/>
    <property type="evidence" value="ECO:0007669"/>
    <property type="project" value="UniProtKB-SubCell"/>
</dbReference>
<dbReference type="GO" id="GO:0005829">
    <property type="term" value="C:cytosol"/>
    <property type="evidence" value="ECO:0000318"/>
    <property type="project" value="GO_Central"/>
</dbReference>
<dbReference type="GO" id="GO:0000408">
    <property type="term" value="C:EKC/KEOPS complex"/>
    <property type="evidence" value="ECO:0000318"/>
    <property type="project" value="GO_Central"/>
</dbReference>
<dbReference type="GO" id="GO:0005634">
    <property type="term" value="C:nucleus"/>
    <property type="evidence" value="ECO:0000318"/>
    <property type="project" value="GO_Central"/>
</dbReference>
<dbReference type="GO" id="GO:0005524">
    <property type="term" value="F:ATP binding"/>
    <property type="evidence" value="ECO:0007669"/>
    <property type="project" value="UniProtKB-KW"/>
</dbReference>
<dbReference type="GO" id="GO:0016887">
    <property type="term" value="F:ATP hydrolysis activity"/>
    <property type="evidence" value="ECO:0007669"/>
    <property type="project" value="EnsemblFungi"/>
</dbReference>
<dbReference type="GO" id="GO:0106310">
    <property type="term" value="F:protein serine kinase activity"/>
    <property type="evidence" value="ECO:0007669"/>
    <property type="project" value="RHEA"/>
</dbReference>
<dbReference type="GO" id="GO:0004674">
    <property type="term" value="F:protein serine/threonine kinase activity"/>
    <property type="evidence" value="ECO:0000318"/>
    <property type="project" value="GO_Central"/>
</dbReference>
<dbReference type="GO" id="GO:0045944">
    <property type="term" value="P:positive regulation of transcription by RNA polymerase II"/>
    <property type="evidence" value="ECO:0007669"/>
    <property type="project" value="EnsemblFungi"/>
</dbReference>
<dbReference type="GO" id="GO:0000722">
    <property type="term" value="P:telomere maintenance via recombination"/>
    <property type="evidence" value="ECO:0007669"/>
    <property type="project" value="EnsemblFungi"/>
</dbReference>
<dbReference type="GO" id="GO:0008033">
    <property type="term" value="P:tRNA processing"/>
    <property type="evidence" value="ECO:0007669"/>
    <property type="project" value="UniProtKB-KW"/>
</dbReference>
<dbReference type="GO" id="GO:0070525">
    <property type="term" value="P:tRNA threonylcarbamoyladenosine metabolic process"/>
    <property type="evidence" value="ECO:0000318"/>
    <property type="project" value="GO_Central"/>
</dbReference>
<dbReference type="FunFam" id="1.10.510.10:FF:000745">
    <property type="entry name" value="Serine/threonine-protein kinase BUD32"/>
    <property type="match status" value="1"/>
</dbReference>
<dbReference type="Gene3D" id="3.30.200.20">
    <property type="entry name" value="Phosphorylase Kinase, domain 1"/>
    <property type="match status" value="1"/>
</dbReference>
<dbReference type="Gene3D" id="1.10.510.10">
    <property type="entry name" value="Transferase(Phosphotransferase) domain 1"/>
    <property type="match status" value="1"/>
</dbReference>
<dbReference type="InterPro" id="IPR002575">
    <property type="entry name" value="Aminoglycoside_PTrfase"/>
</dbReference>
<dbReference type="InterPro" id="IPR022495">
    <property type="entry name" value="Bud32"/>
</dbReference>
<dbReference type="InterPro" id="IPR011009">
    <property type="entry name" value="Kinase-like_dom_sf"/>
</dbReference>
<dbReference type="InterPro" id="IPR000719">
    <property type="entry name" value="Prot_kinase_dom"/>
</dbReference>
<dbReference type="InterPro" id="IPR008266">
    <property type="entry name" value="Tyr_kinase_AS"/>
</dbReference>
<dbReference type="NCBIfam" id="TIGR03724">
    <property type="entry name" value="arch_bud32"/>
    <property type="match status" value="1"/>
</dbReference>
<dbReference type="PANTHER" id="PTHR12209:SF0">
    <property type="entry name" value="EKC_KEOPS COMPLEX SUBUNIT TP53RK"/>
    <property type="match status" value="1"/>
</dbReference>
<dbReference type="PANTHER" id="PTHR12209">
    <property type="entry name" value="NON-SPECIFIC SERINE/THREONINE PROTEIN KINASE"/>
    <property type="match status" value="1"/>
</dbReference>
<dbReference type="Pfam" id="PF01636">
    <property type="entry name" value="APH"/>
    <property type="match status" value="1"/>
</dbReference>
<dbReference type="SUPFAM" id="SSF56112">
    <property type="entry name" value="Protein kinase-like (PK-like)"/>
    <property type="match status" value="1"/>
</dbReference>
<dbReference type="PROSITE" id="PS50011">
    <property type="entry name" value="PROTEIN_KINASE_DOM"/>
    <property type="match status" value="1"/>
</dbReference>
<dbReference type="PROSITE" id="PS00109">
    <property type="entry name" value="PROTEIN_KINASE_TYR"/>
    <property type="match status" value="1"/>
</dbReference>
<comment type="function">
    <text evidence="1">Component of the EKC/KEOPS complex that is required for the formation of a threonylcarbamoyl group on adenosine at position 37 (t(6)A37) in tRNAs that read codons beginning with adenine. The complex is probably involved in the transfer of the threonylcarbamoyl moiety of threonylcarbamoyl-AMP (TC-AMP) to the N6 group of A37. BUD32 has ATPase activity in the context of the EKC/KEOPS complex and likely plays a supporting role to the catalytic subunit KAE1. The EKC/KEOPS complex also promotes both telomere uncapping and telomere elongation. The complex is required for efficient recruitment of transcriptional coactivators.</text>
</comment>
<comment type="catalytic activity">
    <reaction evidence="1">
        <text>L-seryl-[protein] + ATP = O-phospho-L-seryl-[protein] + ADP + H(+)</text>
        <dbReference type="Rhea" id="RHEA:17989"/>
        <dbReference type="Rhea" id="RHEA-COMP:9863"/>
        <dbReference type="Rhea" id="RHEA-COMP:11604"/>
        <dbReference type="ChEBI" id="CHEBI:15378"/>
        <dbReference type="ChEBI" id="CHEBI:29999"/>
        <dbReference type="ChEBI" id="CHEBI:30616"/>
        <dbReference type="ChEBI" id="CHEBI:83421"/>
        <dbReference type="ChEBI" id="CHEBI:456216"/>
        <dbReference type="EC" id="2.7.11.1"/>
    </reaction>
</comment>
<comment type="catalytic activity">
    <reaction evidence="1">
        <text>L-threonyl-[protein] + ATP = O-phospho-L-threonyl-[protein] + ADP + H(+)</text>
        <dbReference type="Rhea" id="RHEA:46608"/>
        <dbReference type="Rhea" id="RHEA-COMP:11060"/>
        <dbReference type="Rhea" id="RHEA-COMP:11605"/>
        <dbReference type="ChEBI" id="CHEBI:15378"/>
        <dbReference type="ChEBI" id="CHEBI:30013"/>
        <dbReference type="ChEBI" id="CHEBI:30616"/>
        <dbReference type="ChEBI" id="CHEBI:61977"/>
        <dbReference type="ChEBI" id="CHEBI:456216"/>
        <dbReference type="EC" id="2.7.11.1"/>
    </reaction>
</comment>
<comment type="subunit">
    <text evidence="1">Component of the EKC/KEOPS complex composed of at least BUD32, CGI121, GON7, KAE1 and PCC1; the whole complex dimerizes.</text>
</comment>
<comment type="subcellular location">
    <subcellularLocation>
        <location evidence="1">Cytoplasm</location>
    </subcellularLocation>
    <subcellularLocation>
        <location evidence="1">Nucleus</location>
    </subcellularLocation>
    <subcellularLocation>
        <location evidence="1">Chromosome</location>
        <location evidence="1">Telomere</location>
    </subcellularLocation>
</comment>
<comment type="domain">
    <text evidence="1 2">This protein is considered an atypical serine/threonine kinase, because it lacks the conventional structural elements necessary for the substrate recognition as well as a lysine residue that in all other serine/threonine kinases participates in the catalytic event (By similarity). BUD32 has protein kinase activity in vitro, but in the context of the EKC/KEOPS complex, the catalytic subunit KAE1 switches the activity of BUD32 from kinase into ATPase (By similarity).</text>
</comment>
<comment type="similarity">
    <text evidence="6">Belongs to the protein kinase superfamily. BUD32 family.</text>
</comment>
<keyword id="KW-0010">Activator</keyword>
<keyword id="KW-0067">ATP-binding</keyword>
<keyword id="KW-0158">Chromosome</keyword>
<keyword id="KW-0963">Cytoplasm</keyword>
<keyword id="KW-0378">Hydrolase</keyword>
<keyword id="KW-0418">Kinase</keyword>
<keyword id="KW-0547">Nucleotide-binding</keyword>
<keyword id="KW-0539">Nucleus</keyword>
<keyword id="KW-0597">Phosphoprotein</keyword>
<keyword id="KW-1185">Reference proteome</keyword>
<keyword id="KW-0723">Serine/threonine-protein kinase</keyword>
<keyword id="KW-0779">Telomere</keyword>
<keyword id="KW-0804">Transcription</keyword>
<keyword id="KW-0805">Transcription regulation</keyword>
<keyword id="KW-0808">Transferase</keyword>
<keyword id="KW-0819">tRNA processing</keyword>
<gene>
    <name type="primary">BUD32</name>
    <name type="ordered locus">YALI0F09471g</name>
</gene>
<name>BUD32_YARLI</name>
<protein>
    <recommendedName>
        <fullName>EKC/KEOPS complex subunit BUD32</fullName>
        <ecNumber evidence="2">3.6.-.-</ecNumber>
    </recommendedName>
    <alternativeName>
        <fullName>Atypical serine/threonine protein kinase BUD32</fullName>
        <ecNumber evidence="1">2.7.11.1</ecNumber>
    </alternativeName>
</protein>
<evidence type="ECO:0000250" key="1">
    <source>
        <dbReference type="UniProtKB" id="P53323"/>
    </source>
</evidence>
<evidence type="ECO:0000250" key="2">
    <source>
        <dbReference type="UniProtKB" id="Q9UYB9"/>
    </source>
</evidence>
<evidence type="ECO:0000255" key="3">
    <source>
        <dbReference type="PROSITE-ProRule" id="PRU00159"/>
    </source>
</evidence>
<evidence type="ECO:0000255" key="4">
    <source>
        <dbReference type="PROSITE-ProRule" id="PRU10028"/>
    </source>
</evidence>
<evidence type="ECO:0000256" key="5">
    <source>
        <dbReference type="SAM" id="MobiDB-lite"/>
    </source>
</evidence>
<evidence type="ECO:0000305" key="6"/>
<sequence length="248" mass="27804">MITLPEQLEKLSKQENLIAQGAESLVYSAQHPYLPQQECIVKYRPKKPYRLPELDAQLSKHRTLAEARVLQKLALGDVEVPHLVFIDAKNGLIYMEKIEGLSVKQWIWNEEGDTEGGAQEAGDKSRSLPDGDVSSLKDTLVLVGQEIGKLHKSDIVHGDLTTSNVMLRDGKPVIIDFGLASVSTLAEDKAVDLYVMERAVLSTHPVHSQQYCDWLFEGYLAVVGKSQKEVMRKLEDVRQRGRKRSMLG</sequence>
<feature type="chain" id="PRO_0000278918" description="EKC/KEOPS complex subunit BUD32">
    <location>
        <begin position="1"/>
        <end position="248"/>
    </location>
</feature>
<feature type="domain" description="Protein kinase" evidence="3">
    <location>
        <begin position="12"/>
        <end position="248"/>
    </location>
</feature>
<feature type="region of interest" description="Disordered" evidence="5">
    <location>
        <begin position="113"/>
        <end position="132"/>
    </location>
</feature>
<feature type="active site" description="Proton acceptor" evidence="3 4">
    <location>
        <position position="159"/>
    </location>
</feature>
<feature type="binding site" evidence="3">
    <location>
        <begin position="18"/>
        <end position="26"/>
    </location>
    <ligand>
        <name>ATP</name>
        <dbReference type="ChEBI" id="CHEBI:30616"/>
    </ligand>
</feature>
<feature type="binding site" evidence="3">
    <location>
        <position position="42"/>
    </location>
    <ligand>
        <name>ATP</name>
        <dbReference type="ChEBI" id="CHEBI:30616"/>
    </ligand>
</feature>
<organism>
    <name type="scientific">Yarrowia lipolytica (strain CLIB 122 / E 150)</name>
    <name type="common">Yeast</name>
    <name type="synonym">Candida lipolytica</name>
    <dbReference type="NCBI Taxonomy" id="284591"/>
    <lineage>
        <taxon>Eukaryota</taxon>
        <taxon>Fungi</taxon>
        <taxon>Dikarya</taxon>
        <taxon>Ascomycota</taxon>
        <taxon>Saccharomycotina</taxon>
        <taxon>Dipodascomycetes</taxon>
        <taxon>Dipodascales</taxon>
        <taxon>Dipodascales incertae sedis</taxon>
        <taxon>Yarrowia</taxon>
    </lineage>
</organism>